<protein>
    <recommendedName>
        <fullName>Meiotically up-regulated gene 109 protein</fullName>
    </recommendedName>
</protein>
<proteinExistence type="evidence at protein level"/>
<evidence type="ECO:0000255" key="1"/>
<evidence type="ECO:0000269" key="2">
    <source>
    </source>
</evidence>
<evidence type="ECO:0000305" key="3"/>
<accession>Q9P7C2</accession>
<name>MU109_SCHPO</name>
<organism>
    <name type="scientific">Schizosaccharomyces pombe (strain 972 / ATCC 24843)</name>
    <name type="common">Fission yeast</name>
    <dbReference type="NCBI Taxonomy" id="284812"/>
    <lineage>
        <taxon>Eukaryota</taxon>
        <taxon>Fungi</taxon>
        <taxon>Dikarya</taxon>
        <taxon>Ascomycota</taxon>
        <taxon>Taphrinomycotina</taxon>
        <taxon>Schizosaccharomycetes</taxon>
        <taxon>Schizosaccharomycetales</taxon>
        <taxon>Schizosaccharomycetaceae</taxon>
        <taxon>Schizosaccharomyces</taxon>
    </lineage>
</organism>
<reference key="1">
    <citation type="journal article" date="2002" name="Nature">
        <title>The genome sequence of Schizosaccharomyces pombe.</title>
        <authorList>
            <person name="Wood V."/>
            <person name="Gwilliam R."/>
            <person name="Rajandream M.A."/>
            <person name="Lyne M.H."/>
            <person name="Lyne R."/>
            <person name="Stewart A."/>
            <person name="Sgouros J.G."/>
            <person name="Peat N."/>
            <person name="Hayles J."/>
            <person name="Baker S.G."/>
            <person name="Basham D."/>
            <person name="Bowman S."/>
            <person name="Brooks K."/>
            <person name="Brown D."/>
            <person name="Brown S."/>
            <person name="Chillingworth T."/>
            <person name="Churcher C.M."/>
            <person name="Collins M."/>
            <person name="Connor R."/>
            <person name="Cronin A."/>
            <person name="Davis P."/>
            <person name="Feltwell T."/>
            <person name="Fraser A."/>
            <person name="Gentles S."/>
            <person name="Goble A."/>
            <person name="Hamlin N."/>
            <person name="Harris D.E."/>
            <person name="Hidalgo J."/>
            <person name="Hodgson G."/>
            <person name="Holroyd S."/>
            <person name="Hornsby T."/>
            <person name="Howarth S."/>
            <person name="Huckle E.J."/>
            <person name="Hunt S."/>
            <person name="Jagels K."/>
            <person name="James K.D."/>
            <person name="Jones L."/>
            <person name="Jones M."/>
            <person name="Leather S."/>
            <person name="McDonald S."/>
            <person name="McLean J."/>
            <person name="Mooney P."/>
            <person name="Moule S."/>
            <person name="Mungall K.L."/>
            <person name="Murphy L.D."/>
            <person name="Niblett D."/>
            <person name="Odell C."/>
            <person name="Oliver K."/>
            <person name="O'Neil S."/>
            <person name="Pearson D."/>
            <person name="Quail M.A."/>
            <person name="Rabbinowitsch E."/>
            <person name="Rutherford K.M."/>
            <person name="Rutter S."/>
            <person name="Saunders D."/>
            <person name="Seeger K."/>
            <person name="Sharp S."/>
            <person name="Skelton J."/>
            <person name="Simmonds M.N."/>
            <person name="Squares R."/>
            <person name="Squares S."/>
            <person name="Stevens K."/>
            <person name="Taylor K."/>
            <person name="Taylor R.G."/>
            <person name="Tivey A."/>
            <person name="Walsh S.V."/>
            <person name="Warren T."/>
            <person name="Whitehead S."/>
            <person name="Woodward J.R."/>
            <person name="Volckaert G."/>
            <person name="Aert R."/>
            <person name="Robben J."/>
            <person name="Grymonprez B."/>
            <person name="Weltjens I."/>
            <person name="Vanstreels E."/>
            <person name="Rieger M."/>
            <person name="Schaefer M."/>
            <person name="Mueller-Auer S."/>
            <person name="Gabel C."/>
            <person name="Fuchs M."/>
            <person name="Duesterhoeft A."/>
            <person name="Fritzc C."/>
            <person name="Holzer E."/>
            <person name="Moestl D."/>
            <person name="Hilbert H."/>
            <person name="Borzym K."/>
            <person name="Langer I."/>
            <person name="Beck A."/>
            <person name="Lehrach H."/>
            <person name="Reinhardt R."/>
            <person name="Pohl T.M."/>
            <person name="Eger P."/>
            <person name="Zimmermann W."/>
            <person name="Wedler H."/>
            <person name="Wambutt R."/>
            <person name="Purnelle B."/>
            <person name="Goffeau A."/>
            <person name="Cadieu E."/>
            <person name="Dreano S."/>
            <person name="Gloux S."/>
            <person name="Lelaure V."/>
            <person name="Mottier S."/>
            <person name="Galibert F."/>
            <person name="Aves S.J."/>
            <person name="Xiang Z."/>
            <person name="Hunt C."/>
            <person name="Moore K."/>
            <person name="Hurst S.M."/>
            <person name="Lucas M."/>
            <person name="Rochet M."/>
            <person name="Gaillardin C."/>
            <person name="Tallada V.A."/>
            <person name="Garzon A."/>
            <person name="Thode G."/>
            <person name="Daga R.R."/>
            <person name="Cruzado L."/>
            <person name="Jimenez J."/>
            <person name="Sanchez M."/>
            <person name="del Rey F."/>
            <person name="Benito J."/>
            <person name="Dominguez A."/>
            <person name="Revuelta J.L."/>
            <person name="Moreno S."/>
            <person name="Armstrong J."/>
            <person name="Forsburg S.L."/>
            <person name="Cerutti L."/>
            <person name="Lowe T."/>
            <person name="McCombie W.R."/>
            <person name="Paulsen I."/>
            <person name="Potashkin J."/>
            <person name="Shpakovski G.V."/>
            <person name="Ussery D."/>
            <person name="Barrell B.G."/>
            <person name="Nurse P."/>
        </authorList>
    </citation>
    <scope>NUCLEOTIDE SEQUENCE [LARGE SCALE GENOMIC DNA]</scope>
    <source>
        <strain>972 / ATCC 24843</strain>
    </source>
</reference>
<reference key="2">
    <citation type="journal article" date="2005" name="Curr. Biol.">
        <title>A large-scale screen in S. pombe identifies seven novel genes required for critical meiotic events.</title>
        <authorList>
            <person name="Martin-Castellanos C."/>
            <person name="Blanco M."/>
            <person name="Rozalen A.E."/>
            <person name="Perez-Hidalgo L."/>
            <person name="Garcia A.I."/>
            <person name="Conde F."/>
            <person name="Mata J."/>
            <person name="Ellermeier C."/>
            <person name="Davis L."/>
            <person name="San-Segundo P."/>
            <person name="Smith G.R."/>
            <person name="Moreno S."/>
        </authorList>
    </citation>
    <scope>FUNCTION IN MEIOSIS</scope>
</reference>
<comment type="function">
    <text evidence="2">Has a role in meiosis.</text>
</comment>
<comment type="subcellular location">
    <subcellularLocation>
        <location evidence="3">Membrane</location>
        <topology evidence="3">Multi-pass membrane protein</topology>
    </subcellularLocation>
</comment>
<feature type="chain" id="PRO_0000278620" description="Meiotically up-regulated gene 109 protein">
    <location>
        <begin position="1"/>
        <end position="163"/>
    </location>
</feature>
<feature type="transmembrane region" description="Helical" evidence="1">
    <location>
        <begin position="61"/>
        <end position="78"/>
    </location>
</feature>
<feature type="transmembrane region" description="Helical" evidence="1">
    <location>
        <begin position="82"/>
        <end position="104"/>
    </location>
</feature>
<feature type="transmembrane region" description="Helical" evidence="1">
    <location>
        <begin position="114"/>
        <end position="134"/>
    </location>
</feature>
<feature type="transmembrane region" description="Helical" evidence="1">
    <location>
        <begin position="136"/>
        <end position="156"/>
    </location>
</feature>
<sequence>MMKLENKLHRVLCSLHQNSISTHKTYVAVAAQDEYVRMGKVSLPRMYAVKPRIQKNFQDNYRFYGTLLCICWLYFFIWYPFALLALMVGVFLSFVMHGLGSLTINQNIRLDPKYSIPGVCAVTLIVIMFLAPVGRLFWSFCIVSSFAGLHCLLTTYENPAGIL</sequence>
<gene>
    <name type="primary">mug109</name>
    <name type="ORF">SPAC2E1P5.02c</name>
</gene>
<keyword id="KW-0469">Meiosis</keyword>
<keyword id="KW-0472">Membrane</keyword>
<keyword id="KW-1185">Reference proteome</keyword>
<keyword id="KW-0812">Transmembrane</keyword>
<keyword id="KW-1133">Transmembrane helix</keyword>
<dbReference type="EMBL" id="CU329670">
    <property type="protein sequence ID" value="CAB86345.1"/>
    <property type="molecule type" value="Genomic_DNA"/>
</dbReference>
<dbReference type="RefSeq" id="NP_594140.1">
    <property type="nucleotide sequence ID" value="NM_001019564.2"/>
</dbReference>
<dbReference type="SMR" id="Q9P7C2"/>
<dbReference type="BioGRID" id="277940">
    <property type="interactions" value="11"/>
</dbReference>
<dbReference type="FunCoup" id="Q9P7C2">
    <property type="interactions" value="120"/>
</dbReference>
<dbReference type="PaxDb" id="4896-SPAC2E1P5.02c.1"/>
<dbReference type="EnsemblFungi" id="SPAC2E1P5.02c.1">
    <property type="protein sequence ID" value="SPAC2E1P5.02c.1:pep"/>
    <property type="gene ID" value="SPAC2E1P5.02c"/>
</dbReference>
<dbReference type="GeneID" id="2541435"/>
<dbReference type="KEGG" id="spo:2541435"/>
<dbReference type="PomBase" id="SPAC2E1P5.02c">
    <property type="gene designation" value="mug109"/>
</dbReference>
<dbReference type="VEuPathDB" id="FungiDB:SPAC2E1P5.02c"/>
<dbReference type="HOGENOM" id="CLU_1636371_0_0_1"/>
<dbReference type="InParanoid" id="Q9P7C2"/>
<dbReference type="OMA" id="WYPFALL"/>
<dbReference type="PRO" id="PR:Q9P7C2"/>
<dbReference type="Proteomes" id="UP000002485">
    <property type="component" value="Chromosome I"/>
</dbReference>
<dbReference type="GO" id="GO:0005794">
    <property type="term" value="C:Golgi apparatus"/>
    <property type="evidence" value="ECO:0000318"/>
    <property type="project" value="GO_Central"/>
</dbReference>
<dbReference type="GO" id="GO:0016020">
    <property type="term" value="C:membrane"/>
    <property type="evidence" value="ECO:0007669"/>
    <property type="project" value="UniProtKB-SubCell"/>
</dbReference>
<dbReference type="GO" id="GO:0031267">
    <property type="term" value="F:small GTPase binding"/>
    <property type="evidence" value="ECO:0000255"/>
    <property type="project" value="PomBase"/>
</dbReference>
<dbReference type="GO" id="GO:0051321">
    <property type="term" value="P:meiotic cell cycle"/>
    <property type="evidence" value="ECO:0007669"/>
    <property type="project" value="UniProtKB-KW"/>
</dbReference>